<dbReference type="EMBL" id="U07187">
    <property type="protein sequence ID" value="AAA16835.1"/>
    <property type="molecule type" value="Unassigned_DNA"/>
</dbReference>
<dbReference type="EMBL" id="DQ356633">
    <property type="protein sequence ID" value="ABC86937.1"/>
    <property type="molecule type" value="Genomic_DNA"/>
</dbReference>
<dbReference type="EMBL" id="DQ356634">
    <property type="protein sequence ID" value="ABC86938.1"/>
    <property type="molecule type" value="Genomic_DNA"/>
</dbReference>
<dbReference type="EMBL" id="DQ356635">
    <property type="protein sequence ID" value="ABC86939.1"/>
    <property type="molecule type" value="Genomic_DNA"/>
</dbReference>
<dbReference type="EMBL" id="DQ356636">
    <property type="protein sequence ID" value="ABC86940.1"/>
    <property type="molecule type" value="Genomic_DNA"/>
</dbReference>
<dbReference type="EMBL" id="DQ356637">
    <property type="protein sequence ID" value="ABC86941.1"/>
    <property type="molecule type" value="Genomic_DNA"/>
</dbReference>
<dbReference type="EMBL" id="DQ356638">
    <property type="protein sequence ID" value="ABC86942.1"/>
    <property type="molecule type" value="Genomic_DNA"/>
</dbReference>
<dbReference type="EMBL" id="DQ356639">
    <property type="protein sequence ID" value="ABC86943.1"/>
    <property type="molecule type" value="Genomic_DNA"/>
</dbReference>
<dbReference type="EMBL" id="DQ356640">
    <property type="protein sequence ID" value="ABC86944.1"/>
    <property type="molecule type" value="Genomic_DNA"/>
</dbReference>
<dbReference type="EMBL" id="DQ356641">
    <property type="protein sequence ID" value="ABC86945.1"/>
    <property type="molecule type" value="Genomic_DNA"/>
</dbReference>
<dbReference type="EMBL" id="DQ356642">
    <property type="protein sequence ID" value="ABC86946.1"/>
    <property type="molecule type" value="Genomic_DNA"/>
</dbReference>
<dbReference type="EMBL" id="DQ356643">
    <property type="protein sequence ID" value="ABC86947.1"/>
    <property type="molecule type" value="Genomic_DNA"/>
</dbReference>
<dbReference type="EMBL" id="DQ356644">
    <property type="protein sequence ID" value="ABC86948.1"/>
    <property type="molecule type" value="Genomic_DNA"/>
</dbReference>
<dbReference type="EMBL" id="DQ356645">
    <property type="protein sequence ID" value="ABC86949.1"/>
    <property type="molecule type" value="Genomic_DNA"/>
</dbReference>
<dbReference type="EMBL" id="DQ356646">
    <property type="protein sequence ID" value="ABC86950.1"/>
    <property type="molecule type" value="Genomic_DNA"/>
</dbReference>
<dbReference type="EMBL" id="Z49705">
    <property type="protein sequence ID" value="CAA89803.1"/>
    <property type="molecule type" value="Genomic_DNA"/>
</dbReference>
<dbReference type="EMBL" id="BK006946">
    <property type="protein sequence ID" value="DAA10063.1"/>
    <property type="molecule type" value="Genomic_DNA"/>
</dbReference>
<dbReference type="PIR" id="S54525">
    <property type="entry name" value="S54525"/>
</dbReference>
<dbReference type="RefSeq" id="NP_013890.1">
    <property type="nucleotide sequence ID" value="NM_001182671.1"/>
</dbReference>
<dbReference type="PDB" id="4E4W">
    <property type="method" value="X-ray"/>
    <property type="resolution" value="2.50 A"/>
    <property type="chains" value="A=485-769"/>
</dbReference>
<dbReference type="PDB" id="4FMN">
    <property type="method" value="X-ray"/>
    <property type="resolution" value="2.69 A"/>
    <property type="chains" value="A=485-769"/>
</dbReference>
<dbReference type="PDB" id="4FMO">
    <property type="method" value="X-ray"/>
    <property type="resolution" value="3.04 A"/>
    <property type="chains" value="A=485-769"/>
</dbReference>
<dbReference type="PDB" id="6RMN">
    <property type="method" value="X-ray"/>
    <property type="resolution" value="2.20 A"/>
    <property type="chains" value="A=505-769"/>
</dbReference>
<dbReference type="PDB" id="6SHX">
    <property type="method" value="X-ray"/>
    <property type="resolution" value="2.40 A"/>
    <property type="chains" value="A=505-769"/>
</dbReference>
<dbReference type="PDB" id="6SNS">
    <property type="method" value="X-ray"/>
    <property type="resolution" value="2.60 A"/>
    <property type="chains" value="A=505-769"/>
</dbReference>
<dbReference type="PDB" id="6SNV">
    <property type="method" value="X-ray"/>
    <property type="resolution" value="2.50 A"/>
    <property type="chains" value="A/D=505-769"/>
</dbReference>
<dbReference type="PDBsum" id="4E4W"/>
<dbReference type="PDBsum" id="4FMN"/>
<dbReference type="PDBsum" id="4FMO"/>
<dbReference type="PDBsum" id="6RMN"/>
<dbReference type="PDBsum" id="6SHX"/>
<dbReference type="PDBsum" id="6SNS"/>
<dbReference type="PDBsum" id="6SNV"/>
<dbReference type="SMR" id="P38920"/>
<dbReference type="BioGRID" id="35345">
    <property type="interactions" value="240"/>
</dbReference>
<dbReference type="ComplexPortal" id="CPX-1666">
    <property type="entry name" value="MutLalpha endonuclease complex"/>
</dbReference>
<dbReference type="ComplexPortal" id="CPX-1667">
    <property type="entry name" value="MutLbeta endonuclease complex"/>
</dbReference>
<dbReference type="ComplexPortal" id="CPX-1668">
    <property type="entry name" value="MLH1-MLH3 endonuclease complex"/>
</dbReference>
<dbReference type="DIP" id="DIP-2412N"/>
<dbReference type="FunCoup" id="P38920">
    <property type="interactions" value="880"/>
</dbReference>
<dbReference type="IntAct" id="P38920">
    <property type="interactions" value="18"/>
</dbReference>
<dbReference type="MINT" id="P38920"/>
<dbReference type="STRING" id="4932.YMR167W"/>
<dbReference type="iPTMnet" id="P38920"/>
<dbReference type="PaxDb" id="4932-YMR167W"/>
<dbReference type="PeptideAtlas" id="P38920"/>
<dbReference type="EnsemblFungi" id="YMR167W_mRNA">
    <property type="protein sequence ID" value="YMR167W"/>
    <property type="gene ID" value="YMR167W"/>
</dbReference>
<dbReference type="GeneID" id="855203"/>
<dbReference type="KEGG" id="sce:YMR167W"/>
<dbReference type="AGR" id="SGD:S000004777"/>
<dbReference type="SGD" id="S000004777">
    <property type="gene designation" value="MLH1"/>
</dbReference>
<dbReference type="VEuPathDB" id="FungiDB:YMR167W"/>
<dbReference type="eggNOG" id="KOG1979">
    <property type="taxonomic scope" value="Eukaryota"/>
</dbReference>
<dbReference type="GeneTree" id="ENSGT00800000124177"/>
<dbReference type="HOGENOM" id="CLU_004131_2_0_1"/>
<dbReference type="InParanoid" id="P38920"/>
<dbReference type="OMA" id="ANYHVKK"/>
<dbReference type="OrthoDB" id="10263226at2759"/>
<dbReference type="BioCyc" id="YEAST:G3O-32857-MONOMER"/>
<dbReference type="BRENDA" id="3.6.1.3">
    <property type="organism ID" value="984"/>
</dbReference>
<dbReference type="Reactome" id="R-SCE-5358565">
    <property type="pathway name" value="Mismatch repair (MMR) directed by MSH2:MSH6 (MutSalpha)"/>
</dbReference>
<dbReference type="SABIO-RK" id="P38920"/>
<dbReference type="BioGRID-ORCS" id="855203">
    <property type="hits" value="0 hits in 10 CRISPR screens"/>
</dbReference>
<dbReference type="EvolutionaryTrace" id="P38920"/>
<dbReference type="PRO" id="PR:P38920"/>
<dbReference type="Proteomes" id="UP000002311">
    <property type="component" value="Chromosome XIII"/>
</dbReference>
<dbReference type="RNAct" id="P38920">
    <property type="molecule type" value="protein"/>
</dbReference>
<dbReference type="GO" id="GO:0005737">
    <property type="term" value="C:cytoplasm"/>
    <property type="evidence" value="ECO:0007005"/>
    <property type="project" value="SGD"/>
</dbReference>
<dbReference type="GO" id="GO:0005739">
    <property type="term" value="C:mitochondrion"/>
    <property type="evidence" value="ECO:0007005"/>
    <property type="project" value="SGD"/>
</dbReference>
<dbReference type="GO" id="GO:0032389">
    <property type="term" value="C:MutLalpha complex"/>
    <property type="evidence" value="ECO:0000353"/>
    <property type="project" value="ComplexPortal"/>
</dbReference>
<dbReference type="GO" id="GO:0032390">
    <property type="term" value="C:MutLbeta complex"/>
    <property type="evidence" value="ECO:0000353"/>
    <property type="project" value="ComplexPortal"/>
</dbReference>
<dbReference type="GO" id="GO:0097587">
    <property type="term" value="C:MutLgamma complex"/>
    <property type="evidence" value="ECO:0000353"/>
    <property type="project" value="ComplexPortal"/>
</dbReference>
<dbReference type="GO" id="GO:0005634">
    <property type="term" value="C:nucleus"/>
    <property type="evidence" value="ECO:0007005"/>
    <property type="project" value="SGD"/>
</dbReference>
<dbReference type="GO" id="GO:0005524">
    <property type="term" value="F:ATP binding"/>
    <property type="evidence" value="ECO:0000315"/>
    <property type="project" value="SGD"/>
</dbReference>
<dbReference type="GO" id="GO:0016887">
    <property type="term" value="F:ATP hydrolysis activity"/>
    <property type="evidence" value="ECO:0000314"/>
    <property type="project" value="SGD"/>
</dbReference>
<dbReference type="GO" id="GO:0140664">
    <property type="term" value="F:ATP-dependent DNA damage sensor activity"/>
    <property type="evidence" value="ECO:0007669"/>
    <property type="project" value="InterPro"/>
</dbReference>
<dbReference type="GO" id="GO:0030983">
    <property type="term" value="F:mismatched DNA binding"/>
    <property type="evidence" value="ECO:0007669"/>
    <property type="project" value="InterPro"/>
</dbReference>
<dbReference type="GO" id="GO:0000713">
    <property type="term" value="P:meiotic heteroduplex formation"/>
    <property type="evidence" value="ECO:0000315"/>
    <property type="project" value="SGD"/>
</dbReference>
<dbReference type="GO" id="GO:0000710">
    <property type="term" value="P:meiotic mismatch repair"/>
    <property type="evidence" value="ECO:0000314"/>
    <property type="project" value="ComplexPortal"/>
</dbReference>
<dbReference type="GO" id="GO:0006298">
    <property type="term" value="P:mismatch repair"/>
    <property type="evidence" value="ECO:0000315"/>
    <property type="project" value="SGD"/>
</dbReference>
<dbReference type="GO" id="GO:0007131">
    <property type="term" value="P:reciprocal meiotic recombination"/>
    <property type="evidence" value="ECO:0000315"/>
    <property type="project" value="SGD"/>
</dbReference>
<dbReference type="CDD" id="cd16926">
    <property type="entry name" value="HATPase_MutL-MLH-PMS-like"/>
    <property type="match status" value="1"/>
</dbReference>
<dbReference type="CDD" id="cd03483">
    <property type="entry name" value="MutL_Trans_MLH1"/>
    <property type="match status" value="1"/>
</dbReference>
<dbReference type="FunFam" id="3.30.230.10:FF:000014">
    <property type="entry name" value="DNA mismatch repair protein Mlh1"/>
    <property type="match status" value="1"/>
</dbReference>
<dbReference type="FunFam" id="3.30.565.10:FF:000033">
    <property type="entry name" value="DNA mismatch repair protein Mlh1"/>
    <property type="match status" value="1"/>
</dbReference>
<dbReference type="Gene3D" id="3.30.230.10">
    <property type="match status" value="1"/>
</dbReference>
<dbReference type="Gene3D" id="3.30.565.10">
    <property type="entry name" value="Histidine kinase-like ATPase, C-terminal domain"/>
    <property type="match status" value="1"/>
</dbReference>
<dbReference type="InterPro" id="IPR014762">
    <property type="entry name" value="DNA_mismatch_repair_CS"/>
</dbReference>
<dbReference type="InterPro" id="IPR013507">
    <property type="entry name" value="DNA_mismatch_S5_2-like"/>
</dbReference>
<dbReference type="InterPro" id="IPR036890">
    <property type="entry name" value="HATPase_C_sf"/>
</dbReference>
<dbReference type="InterPro" id="IPR032189">
    <property type="entry name" value="Mlh1_C"/>
</dbReference>
<dbReference type="InterPro" id="IPR002099">
    <property type="entry name" value="MutL/Mlh/PMS"/>
</dbReference>
<dbReference type="InterPro" id="IPR038973">
    <property type="entry name" value="MutL/Mlh/Pms-like"/>
</dbReference>
<dbReference type="InterPro" id="IPR020568">
    <property type="entry name" value="Ribosomal_Su5_D2-typ_SF"/>
</dbReference>
<dbReference type="InterPro" id="IPR014721">
    <property type="entry name" value="Ribsml_uS5_D2-typ_fold_subgr"/>
</dbReference>
<dbReference type="NCBIfam" id="TIGR00585">
    <property type="entry name" value="mutl"/>
    <property type="match status" value="1"/>
</dbReference>
<dbReference type="PANTHER" id="PTHR10073">
    <property type="entry name" value="DNA MISMATCH REPAIR PROTEIN MLH, PMS, MUTL"/>
    <property type="match status" value="1"/>
</dbReference>
<dbReference type="PANTHER" id="PTHR10073:SF12">
    <property type="entry name" value="DNA MISMATCH REPAIR PROTEIN MLH1"/>
    <property type="match status" value="1"/>
</dbReference>
<dbReference type="Pfam" id="PF01119">
    <property type="entry name" value="DNA_mis_repair"/>
    <property type="match status" value="1"/>
</dbReference>
<dbReference type="Pfam" id="PF13589">
    <property type="entry name" value="HATPase_c_3"/>
    <property type="match status" value="1"/>
</dbReference>
<dbReference type="Pfam" id="PF16413">
    <property type="entry name" value="Mlh1_C"/>
    <property type="match status" value="1"/>
</dbReference>
<dbReference type="SMART" id="SM01340">
    <property type="entry name" value="DNA_mis_repair"/>
    <property type="match status" value="1"/>
</dbReference>
<dbReference type="SUPFAM" id="SSF55874">
    <property type="entry name" value="ATPase domain of HSP90 chaperone/DNA topoisomerase II/histidine kinase"/>
    <property type="match status" value="1"/>
</dbReference>
<dbReference type="SUPFAM" id="SSF54211">
    <property type="entry name" value="Ribosomal protein S5 domain 2-like"/>
    <property type="match status" value="1"/>
</dbReference>
<dbReference type="PROSITE" id="PS00058">
    <property type="entry name" value="DNA_MISMATCH_REPAIR_1"/>
    <property type="match status" value="1"/>
</dbReference>
<protein>
    <recommendedName>
        <fullName>DNA mismatch repair protein MLH1</fullName>
    </recommendedName>
    <alternativeName>
        <fullName>MutL protein homolog 1</fullName>
    </alternativeName>
    <alternativeName>
        <fullName>Post meiotic segregation protein 2</fullName>
    </alternativeName>
</protein>
<accession>P38920</accession>
<accession>D6VZY9</accession>
<accession>Q2I028</accession>
<accession>Q2I029</accession>
<accession>Q2I031</accession>
<accession>Q2I032</accession>
<accession>Q2I033</accession>
<accession>Q2I034</accession>
<accession>Q2I035</accession>
<accession>Q2I036</accession>
<accession>Q2I038</accession>
<accession>Q2I039</accession>
<accession>Q2I041</accession>
<organism>
    <name type="scientific">Saccharomyces cerevisiae (strain ATCC 204508 / S288c)</name>
    <name type="common">Baker's yeast</name>
    <dbReference type="NCBI Taxonomy" id="559292"/>
    <lineage>
        <taxon>Eukaryota</taxon>
        <taxon>Fungi</taxon>
        <taxon>Dikarya</taxon>
        <taxon>Ascomycota</taxon>
        <taxon>Saccharomycotina</taxon>
        <taxon>Saccharomycetes</taxon>
        <taxon>Saccharomycetales</taxon>
        <taxon>Saccharomycetaceae</taxon>
        <taxon>Saccharomyces</taxon>
    </lineage>
</organism>
<comment type="function">
    <text evidence="2 6 12">Required for DNA mismatch repair (MMR), correcting base-base mismatches and insertion-deletion loops (IDLs) resulting from DNA replication, DNA damage or from recombination events between non-identical sequences during meiosis. Component of different MutL heterodimers that form a ternary complex with the MutS heterodimers, which initially recognize the DNA mismatches. This complex is thought to be responsible for directing the downstream MMR events, including strand discrimination, excision, and resynthesis. Plays a major role in maintaining the genetic stability of simple sequence repeats, the repair of heteroduplex sites present in meiotic recombination intermediates, and the promotion of meiotic crossing-over.</text>
</comment>
<comment type="biophysicochemical properties">
    <kinetics>
        <KM evidence="5">69 uM for ATP</KM>
    </kinetics>
</comment>
<comment type="subunit">
    <text evidence="12">Heterodimer of MLH1 and PMS1, called MutLalpha, which is the major MMR MutL activity correcting base-base mismatches as well as IDLs. The heterodimer binds double strand DNA independently of a mismatch with positive cooperativity and has more than one DNA binding site. Forms a ternary complex with either the MSH2-MSH6 (MutSalpha) or the MSH2-MSH3 heterodimer (MutSbeta), which recognize and bind to mismatch DNA. Ternary complex formation is promoted by ATP binding. Heterodimer of MLH1 and MLH3, called MutLbeta, which is involved in correction of a specific subset of IDLs when associated with MutSbeta. Heterodimer of MLH1 and MLH2.</text>
</comment>
<comment type="interaction">
    <interactant intactId="EBI-11003">
        <id>P38920</id>
    </interactant>
    <interactant intactId="EBI-6738">
        <id>P39875</id>
        <label>EXO1</label>
    </interactant>
    <organismsDiffer>false</organismsDiffer>
    <experiments>3</experiments>
</comment>
<comment type="interaction">
    <interactant intactId="EBI-11003">
        <id>P38920</id>
    </interactant>
    <interactant intactId="EBI-33369">
        <id>Q07980</id>
        <label>MLH2</label>
    </interactant>
    <organismsDiffer>false</organismsDiffer>
    <experiments>5</experiments>
</comment>
<comment type="interaction">
    <interactant intactId="EBI-11003">
        <id>P38920</id>
    </interactant>
    <interactant intactId="EBI-31634">
        <id>Q12083</id>
        <label>MLH3</label>
    </interactant>
    <organismsDiffer>false</organismsDiffer>
    <experiments>5</experiments>
</comment>
<comment type="interaction">
    <interactant intactId="EBI-11003">
        <id>P38920</id>
    </interactant>
    <interactant intactId="EBI-12303">
        <id>Q08214</id>
        <label>NTG2</label>
    </interactant>
    <organismsDiffer>false</organismsDiffer>
    <experiments>3</experiments>
</comment>
<comment type="interaction">
    <interactant intactId="EBI-11003">
        <id>P38920</id>
    </interactant>
    <interactant intactId="EBI-13561">
        <id>P14242</id>
        <label>PMS1</label>
    </interactant>
    <organismsDiffer>false</organismsDiffer>
    <experiments>13</experiments>
</comment>
<comment type="subcellular location">
    <subcellularLocation>
        <location evidence="8">Nucleus</location>
    </subcellularLocation>
</comment>
<comment type="miscellaneous">
    <text evidence="9">Present with 319 molecules/cell in log phase SD medium.</text>
</comment>
<comment type="similarity">
    <text evidence="13">Belongs to the DNA mismatch repair MutL/HexB family.</text>
</comment>
<keyword id="KW-0002">3D-structure</keyword>
<keyword id="KW-0227">DNA damage</keyword>
<keyword id="KW-0234">DNA repair</keyword>
<keyword id="KW-0539">Nucleus</keyword>
<keyword id="KW-0597">Phosphoprotein</keyword>
<keyword id="KW-1185">Reference proteome</keyword>
<evidence type="ECO:0000256" key="1">
    <source>
        <dbReference type="SAM" id="MobiDB-lite"/>
    </source>
</evidence>
<evidence type="ECO:0000269" key="2">
    <source>
    </source>
</evidence>
<evidence type="ECO:0000269" key="3">
    <source>
    </source>
</evidence>
<evidence type="ECO:0000269" key="4">
    <source>
    </source>
</evidence>
<evidence type="ECO:0000269" key="5">
    <source>
    </source>
</evidence>
<evidence type="ECO:0000269" key="6">
    <source>
    </source>
</evidence>
<evidence type="ECO:0000269" key="7">
    <source>
    </source>
</evidence>
<evidence type="ECO:0000269" key="8">
    <source>
    </source>
</evidence>
<evidence type="ECO:0000269" key="9">
    <source>
    </source>
</evidence>
<evidence type="ECO:0000269" key="10">
    <source>
    </source>
</evidence>
<evidence type="ECO:0000269" key="11">
    <source>
    </source>
</evidence>
<evidence type="ECO:0000269" key="12">
    <source>
    </source>
</evidence>
<evidence type="ECO:0000305" key="13"/>
<evidence type="ECO:0007744" key="14">
    <source>
    </source>
</evidence>
<evidence type="ECO:0007829" key="15">
    <source>
        <dbReference type="PDB" id="4E4W"/>
    </source>
</evidence>
<evidence type="ECO:0007829" key="16">
    <source>
        <dbReference type="PDB" id="6RMN"/>
    </source>
</evidence>
<evidence type="ECO:0007829" key="17">
    <source>
        <dbReference type="PDB" id="6SHX"/>
    </source>
</evidence>
<evidence type="ECO:0007829" key="18">
    <source>
        <dbReference type="PDB" id="6SNV"/>
    </source>
</evidence>
<gene>
    <name type="primary">MLH1</name>
    <name type="synonym">PMS2</name>
    <name type="ordered locus">YMR167W</name>
    <name type="ORF">YM8520.16</name>
</gene>
<reference key="1">
    <citation type="journal article" date="1994" name="Mol. Cell. Biol.">
        <title>Dual requirement in yeast DNA mismatch repair for MLH1 and PMS1, two homologs of the bacterial mutL gene.</title>
        <authorList>
            <person name="Prolla T.A."/>
            <person name="Christie D.-M."/>
            <person name="Liskay R.M."/>
        </authorList>
    </citation>
    <scope>NUCLEOTIDE SEQUENCE [GENOMIC DNA]</scope>
</reference>
<reference key="2">
    <citation type="journal article" date="2006" name="Proc. Natl. Acad. Sci. U.S.A.">
        <title>Negative epistasis between natural variants of the Saccharomyces cerevisiae MLH1 and PMS1 genes results in a defect in mismatch repair.</title>
        <authorList>
            <person name="Heck J.A."/>
            <person name="Argueso J.L."/>
            <person name="Gemici Z."/>
            <person name="Reeves R.G."/>
            <person name="Bernard A."/>
            <person name="Aquadro C.F."/>
            <person name="Alani E."/>
        </authorList>
    </citation>
    <scope>NUCLEOTIDE SEQUENCE [GENOMIC DNA]</scope>
    <scope>VARIANTS ARG-240; GLU-242; PRO-271; LEU-309; ASP-321; LYS-333; THR-375; GLY-452; ASN-465; SER-470; PHE-607; ASN-678; LEU-703 AND GLY-761</scope>
    <source>
        <strain>ATCC 200060 / W303</strain>
        <strain>EAY1066</strain>
        <strain>EAY1068</strain>
        <strain>M2-8</strain>
        <strain>M5-7</strain>
        <strain>M7-8</strain>
        <strain>SK1</strain>
        <strain>YJM 145</strain>
        <strain>YJM 269</strain>
        <strain>YJM 280</strain>
        <strain>YJM 320</strain>
        <strain>YJM 326</strain>
        <strain>YJM 339</strain>
        <strain>YJM 627</strain>
    </source>
</reference>
<reference key="3">
    <citation type="journal article" date="1997" name="Nature">
        <title>The nucleotide sequence of Saccharomyces cerevisiae chromosome XIII.</title>
        <authorList>
            <person name="Bowman S."/>
            <person name="Churcher C.M."/>
            <person name="Badcock K."/>
            <person name="Brown D."/>
            <person name="Chillingworth T."/>
            <person name="Connor R."/>
            <person name="Dedman K."/>
            <person name="Devlin K."/>
            <person name="Gentles S."/>
            <person name="Hamlin N."/>
            <person name="Hunt S."/>
            <person name="Jagels K."/>
            <person name="Lye G."/>
            <person name="Moule S."/>
            <person name="Odell C."/>
            <person name="Pearson D."/>
            <person name="Rajandream M.A."/>
            <person name="Rice P."/>
            <person name="Skelton J."/>
            <person name="Walsh S.V."/>
            <person name="Whitehead S."/>
            <person name="Barrell B.G."/>
        </authorList>
    </citation>
    <scope>NUCLEOTIDE SEQUENCE [LARGE SCALE GENOMIC DNA]</scope>
    <source>
        <strain>ATCC 204508 / S288c</strain>
    </source>
</reference>
<reference key="4">
    <citation type="journal article" date="2014" name="G3 (Bethesda)">
        <title>The reference genome sequence of Saccharomyces cerevisiae: Then and now.</title>
        <authorList>
            <person name="Engel S.R."/>
            <person name="Dietrich F.S."/>
            <person name="Fisk D.G."/>
            <person name="Binkley G."/>
            <person name="Balakrishnan R."/>
            <person name="Costanzo M.C."/>
            <person name="Dwight S.S."/>
            <person name="Hitz B.C."/>
            <person name="Karra K."/>
            <person name="Nash R.S."/>
            <person name="Weng S."/>
            <person name="Wong E.D."/>
            <person name="Lloyd P."/>
            <person name="Skrzypek M.S."/>
            <person name="Miyasato S.R."/>
            <person name="Simison M."/>
            <person name="Cherry J.M."/>
        </authorList>
    </citation>
    <scope>GENOME REANNOTATION</scope>
    <source>
        <strain>ATCC 204508 / S288c</strain>
    </source>
</reference>
<reference key="5">
    <citation type="journal article" date="2001" name="Hum. Mol. Genet.">
        <title>Functional analysis of human MLH1 and MSH2 missense variants and hybrid human-yeast MLH1 proteins in Saccharomyces cerevisiae.</title>
        <authorList>
            <person name="Ellison A.R."/>
            <person name="Lofing J."/>
            <person name="Bitter G.A."/>
        </authorList>
    </citation>
    <scope>MUTAGENESIS OF ALA-41; GLY-64; ILE-65; GLU-99; ILE-104; THR-114; ARG-214; VAL-216; ARG-265; ILE-326; GLN-552; ARG-672 AND ALA-694</scope>
</reference>
<reference key="6">
    <citation type="journal article" date="1997" name="Mol. Cell. Biol.">
        <title>Functional domains of the Saccharomyces cerevisiae Mlh1p and Pms1p DNA mismatch repair proteins and their relevance to human hereditary nonpolyposis colorectal cancer-associated mutations.</title>
        <authorList>
            <person name="Pang Q."/>
            <person name="Prolla T.A."/>
            <person name="Liskay R.M."/>
        </authorList>
    </citation>
    <scope>INTERACTION WITH PMS1</scope>
    <scope>MUTAGENESIS OF ALA-41; PHE-96; ARG-97; GLY-98; LYS-764; PHE-766; GLU-767 AND CYS-769</scope>
</reference>
<reference key="7">
    <citation type="journal article" date="1998" name="J. Biol. Chem.">
        <title>ATP-dependent assembly of a ternary complex consisting of a DNA mismatch and the yeast MSH2-MSH6 and MLH1-PMS1 protein complexes.</title>
        <authorList>
            <person name="Habraken Y."/>
            <person name="Sung P."/>
            <person name="Prakash L."/>
            <person name="Prakash S."/>
        </authorList>
    </citation>
    <scope>FUNCTION</scope>
    <scope>SUBUNIT</scope>
</reference>
<reference key="8">
    <citation type="journal article" date="1999" name="Proc. Natl. Acad. Sci. U.S.A.">
        <title>Functional specificity of MutL homologs in yeast: evidence for three Mlh1-based heterocomplexes with distinct roles during meiosis in recombination and mismatch correction.</title>
        <authorList>
            <person name="Wang T.-F."/>
            <person name="Kleckner N."/>
            <person name="Hunter N."/>
        </authorList>
    </citation>
    <scope>FUNCTION</scope>
    <scope>INTERACTION WITH MLH2; MLH3 AND PMS1</scope>
</reference>
<reference key="9">
    <citation type="journal article" date="2000" name="Mol. Cell. Biol.">
        <title>Functional studies on the candidate ATPase domains of Saccharomyces cerevisiae MutLalpha.</title>
        <authorList>
            <person name="Tran P.T."/>
            <person name="Liskay R.M."/>
        </authorList>
    </citation>
    <scope>INTERACTION WITH PMS1</scope>
    <scope>ATP-BINDING</scope>
    <scope>MUTAGENESIS OF GLU-31 AND GLY-98</scope>
</reference>
<reference key="10">
    <citation type="journal article" date="2002" name="Biol. Chem.">
        <title>DNA binding properties of the yeast Msh2-Msh6 and Mlh1-Pms1 heterodimers.</title>
        <authorList>
            <person name="Drotschmann K."/>
            <person name="Hall M.C."/>
            <person name="Shcherbakova P.V."/>
            <person name="Wang H."/>
            <person name="Erie D.A."/>
            <person name="Brownewell F.R."/>
            <person name="Kool E.T."/>
            <person name="Kunkel T.A."/>
        </authorList>
    </citation>
    <scope>DNA-BINDING</scope>
</reference>
<reference key="11">
    <citation type="journal article" date="2002" name="J. Biol. Chem.">
        <title>Differential ATP binding and intrinsic ATP hydrolysis by amino-terminal domains of the yeast Mlh1 and Pms1 proteins.</title>
        <authorList>
            <person name="Hall M.C."/>
            <person name="Shcherbakova P.V."/>
            <person name="Kunkel T.A."/>
        </authorList>
    </citation>
    <scope>ATP-BINDING</scope>
    <scope>MUTAGENESIS OF GLU-31 AND ASN-35</scope>
    <scope>BIOPHYSICOCHEMICAL PROPERTIES</scope>
</reference>
<reference key="12">
    <citation type="journal article" date="2003" name="Mol. Cell. Biol.">
        <title>Systematic mutagenesis of the Saccharomyces cerevisiae MLH1 gene reveals distinct roles for Mlh1p in meiotic crossing over and in vegetative and meiotic mismatch repair.</title>
        <authorList>
            <person name="Argueso J.L."/>
            <person name="Kijas A.W."/>
            <person name="Sarin S."/>
            <person name="Heck J.A."/>
            <person name="Waase M."/>
            <person name="Alani E."/>
        </authorList>
    </citation>
    <scope>FUNCTION</scope>
    <scope>MUTAGENESIS</scope>
</reference>
<reference key="13">
    <citation type="journal article" date="2003" name="Nature">
        <title>Global analysis of protein localization in budding yeast.</title>
        <authorList>
            <person name="Huh W.-K."/>
            <person name="Falvo J.V."/>
            <person name="Gerke L.C."/>
            <person name="Carroll A.S."/>
            <person name="Howson R.W."/>
            <person name="Weissman J.S."/>
            <person name="O'Shea E.K."/>
        </authorList>
    </citation>
    <scope>SUBCELLULAR LOCATION [LARGE SCALE ANALYSIS]</scope>
</reference>
<reference key="14">
    <citation type="journal article" date="2003" name="Nature">
        <title>Global analysis of protein expression in yeast.</title>
        <authorList>
            <person name="Ghaemmaghami S."/>
            <person name="Huh W.-K."/>
            <person name="Bower K."/>
            <person name="Howson R.W."/>
            <person name="Belle A."/>
            <person name="Dephoure N."/>
            <person name="O'Shea E.K."/>
            <person name="Weissman J.S."/>
        </authorList>
    </citation>
    <scope>LEVEL OF PROTEIN EXPRESSION [LARGE SCALE ANALYSIS]</scope>
</reference>
<reference key="15">
    <citation type="journal article" date="2003" name="Nucleic Acids Res.">
        <title>DNA binding by yeast Mlh1 and Pms1: implications for DNA mismatch repair.</title>
        <authorList>
            <person name="Hall M.C."/>
            <person name="Shcherbakova P.V."/>
            <person name="Fortune J.M."/>
            <person name="Borchers C.H."/>
            <person name="Dial J.M."/>
            <person name="Tomer K.B."/>
            <person name="Kunkel T.A."/>
        </authorList>
    </citation>
    <scope>DNA-BINDING</scope>
    <scope>MUTAGENESIS OF ARG-273 AND ARG-274</scope>
</reference>
<reference key="16">
    <citation type="journal article" date="2008" name="Mol. Cell. Proteomics">
        <title>A multidimensional chromatography technology for in-depth phosphoproteome analysis.</title>
        <authorList>
            <person name="Albuquerque C.P."/>
            <person name="Smolka M.B."/>
            <person name="Payne S.H."/>
            <person name="Bafna V."/>
            <person name="Eng J."/>
            <person name="Zhou H."/>
        </authorList>
    </citation>
    <scope>PHOSPHORYLATION [LARGE SCALE ANALYSIS] AT SER-441</scope>
    <scope>IDENTIFICATION BY MASS SPECTROMETRY [LARGE SCALE ANALYSIS]</scope>
</reference>
<reference key="17">
    <citation type="journal article" date="2009" name="Science">
        <title>Global analysis of Cdk1 substrate phosphorylation sites provides insights into evolution.</title>
        <authorList>
            <person name="Holt L.J."/>
            <person name="Tuch B.B."/>
            <person name="Villen J."/>
            <person name="Johnson A.D."/>
            <person name="Gygi S.P."/>
            <person name="Morgan D.O."/>
        </authorList>
    </citation>
    <scope>IDENTIFICATION BY MASS SPECTROMETRY [LARGE SCALE ANALYSIS]</scope>
</reference>
<feature type="chain" id="PRO_0000178008" description="DNA mismatch repair protein MLH1">
    <location>
        <begin position="1"/>
        <end position="769"/>
    </location>
</feature>
<feature type="region of interest" description="DNA- and ATP-binding">
    <location>
        <begin position="1"/>
        <end position="335"/>
    </location>
</feature>
<feature type="region of interest" description="Disordered" evidence="1">
    <location>
        <begin position="422"/>
        <end position="480"/>
    </location>
</feature>
<feature type="region of interest" description="Interaction with PMS1">
    <location>
        <begin position="501"/>
        <end position="756"/>
    </location>
</feature>
<feature type="compositionally biased region" description="Polar residues" evidence="1">
    <location>
        <begin position="422"/>
        <end position="441"/>
    </location>
</feature>
<feature type="compositionally biased region" description="Basic and acidic residues" evidence="1">
    <location>
        <begin position="442"/>
        <end position="456"/>
    </location>
</feature>
<feature type="compositionally biased region" description="Basic and acidic residues" evidence="1">
    <location>
        <begin position="464"/>
        <end position="478"/>
    </location>
</feature>
<feature type="modified residue" description="Phosphoserine; by ATM or ATR" evidence="14">
    <location>
        <position position="441"/>
    </location>
</feature>
<feature type="sequence variant" description="In strain: SK1." evidence="10">
    <original>S</original>
    <variation>R</variation>
    <location>
        <position position="240"/>
    </location>
</feature>
<feature type="sequence variant" description="In strain: YJM326 and YJM339." evidence="10">
    <original>D</original>
    <variation>E</variation>
    <location>
        <position position="242"/>
    </location>
</feature>
<feature type="sequence variant" description="In strain: EAY1066, EAY1068, M2-8, M7-8, M5-7, SK1, YJM269, YJM280, YJM320, YJM326, YJM339 and YJM627." evidence="10">
    <original>L</original>
    <variation>P</variation>
    <location>
        <position position="271"/>
    </location>
</feature>
<feature type="sequence variant" description="In strain: M2-8." evidence="10">
    <original>P</original>
    <variation>L</variation>
    <location>
        <position position="309"/>
    </location>
</feature>
<feature type="sequence variant" description="In strain: EAY1066." evidence="10">
    <original>E</original>
    <variation>D</variation>
    <location>
        <position position="321"/>
    </location>
</feature>
<feature type="sequence variant" description="In strain: SK1." evidence="10">
    <original>E</original>
    <variation>K</variation>
    <location>
        <position position="333"/>
    </location>
</feature>
<feature type="sequence variant" description="In strain: YJM339." evidence="10">
    <original>A</original>
    <variation>T</variation>
    <location>
        <position position="375"/>
    </location>
</feature>
<feature type="sequence variant" description="In strain: EAY1068, M2-8, M7-8, M5-7, YJM269 and YJM627." evidence="10">
    <original>S</original>
    <variation>G</variation>
    <location>
        <position position="452"/>
    </location>
</feature>
<feature type="sequence variant" description="In strain: EAY1066 and YJM280." evidence="10">
    <original>D</original>
    <variation>N</variation>
    <location>
        <position position="465"/>
    </location>
</feature>
<feature type="sequence variant" description="In strain: YJM339." evidence="10">
    <original>P</original>
    <variation>S</variation>
    <location>
        <position position="470"/>
    </location>
</feature>
<feature type="sequence variant" description="In strain: EAY1068, M2-8, M7-8, M5-7 and YJM627." evidence="10">
    <original>L</original>
    <variation>F</variation>
    <location>
        <position position="607"/>
    </location>
</feature>
<feature type="sequence variant" description="In strain: SK1, YJM320 and YJM339." evidence="10">
    <original>D</original>
    <variation>N</variation>
    <location>
        <position position="678"/>
    </location>
</feature>
<feature type="sequence variant" description="In strain: SK1, YJM320 and YJM339." evidence="10">
    <original>P</original>
    <variation>L</variation>
    <location>
        <position position="703"/>
    </location>
</feature>
<feature type="sequence variant" description="In strain: EAY1066, EAY1068, M2-8, M7-8, M5-7, SK1, YJM145, YJM269, YJM320, YJM339 and YJM627; forms a non-functional heterodimer with PMS1 from strain S288c, resulting in an accumulation of mutations in spore progeny of crosses between these strains." evidence="10">
    <original>D</original>
    <variation>G</variation>
    <location>
        <position position="761"/>
    </location>
</feature>
<feature type="mutagenesis site" description="Reduces ATPase activity by 98%. Displays 3300-fold increase in spontaneous mutation accumulation." evidence="3 5">
    <original>E</original>
    <variation>A</variation>
    <location>
        <position position="31"/>
    </location>
</feature>
<feature type="mutagenesis site" description="Abolishes ATP binding, reducing ATPase activity by 95%. Displays 9800-fold increase in spontaneous mutation accumulation." evidence="5">
    <original>N</original>
    <variation>A</variation>
    <location>
        <position position="35"/>
    </location>
</feature>
<feature type="mutagenesis site" description="Defective in a mismatch repair assay. Abolishes heterodimer formation. Displays an increases spontaneous mutation accumulation." evidence="4 11">
    <original>A</original>
    <variation>F</variation>
    <location>
        <position position="41"/>
    </location>
</feature>
<feature type="mutagenesis site" description="Reduces heterodimer formation. Displays an weak increase in spontaneous mutation accumulation." evidence="4 11">
    <original>A</original>
    <variation>G</variation>
    <location>
        <position position="41"/>
    </location>
</feature>
<feature type="mutagenesis site" description="Fully functional in a mismatch repair assay." evidence="4 11">
    <original>A</original>
    <variation>S</variation>
    <location>
        <position position="41"/>
    </location>
</feature>
<feature type="mutagenesis site" description="Defective in a mismatch repair assay." evidence="4">
    <original>G</original>
    <variation>R</variation>
    <location>
        <position position="64"/>
    </location>
</feature>
<feature type="mutagenesis site" description="Defective in a mismatch repair assay." evidence="4">
    <original>I</original>
    <variation>N</variation>
    <location>
        <position position="65"/>
    </location>
</feature>
<feature type="mutagenesis site" description="Displays an increase in spontaneous mutation accumulation. Does not impair heterodimer formation." evidence="11">
    <original>F</original>
    <variation>A</variation>
    <location>
        <position position="96"/>
    </location>
</feature>
<feature type="mutagenesis site" description="Displays an increase in spontaneous mutation accumulation. Does not impair heterodimer formation." evidence="11">
    <original>R</original>
    <variation>A</variation>
    <location>
        <position position="97"/>
    </location>
</feature>
<feature type="mutagenesis site" description="Displays an increase in spontaneous mutation accumulation. Does not impair heterodimer formation." evidence="3 11">
    <original>G</original>
    <variation>A</variation>
    <location>
        <position position="98"/>
    </location>
</feature>
<feature type="mutagenesis site" description="Abolishes heterodimer formation. Displays an increase in spontaneous mutation accumulation." evidence="3 11">
    <original>G</original>
    <variation>V</variation>
    <location>
        <position position="98"/>
    </location>
</feature>
<feature type="mutagenesis site" description="Defective in a mismatch repair assay." evidence="4">
    <original>E</original>
    <variation>K</variation>
    <location>
        <position position="99"/>
    </location>
</feature>
<feature type="mutagenesis site" description="Defective in a mismatch repair assay." evidence="4">
    <original>I</original>
    <variation>R</variation>
    <location>
        <position position="104"/>
    </location>
</feature>
<feature type="mutagenesis site" description="Defective in a mismatch repair assay." evidence="4">
    <original>T</original>
    <variation>R</variation>
    <location>
        <position position="114"/>
    </location>
</feature>
<feature type="mutagenesis site" description="Partially defective in a mismatch repair assay." evidence="4">
    <original>R</original>
    <variation>C</variation>
    <location>
        <position position="214"/>
    </location>
</feature>
<feature type="mutagenesis site" description="Fully functional in a mismatch repair assay." evidence="4">
    <original>V</original>
    <variation>I</variation>
    <location>
        <position position="216"/>
    </location>
</feature>
<feature type="mutagenesis site" description="Partially defective in a mismatch repair assay." evidence="4">
    <original>R</original>
    <variation>C</variation>
    <location>
        <position position="265"/>
    </location>
</feature>
<feature type="mutagenesis site" description="Partially defective in a mismatch repair assay." evidence="4">
    <original>R</original>
    <variation>H</variation>
    <location>
        <position position="265"/>
    </location>
</feature>
<feature type="mutagenesis site" description="Strongly reduces DNA-binding and displays 12000-fold increase in spontaneous mutation accumulation; when associated with E-274." evidence="7">
    <original>R</original>
    <variation>E</variation>
    <location>
        <position position="273"/>
    </location>
</feature>
<feature type="mutagenesis site" description="Reduces DNA-binding and displays a 1700-fold increase in spontaneous mutation accumulation. Strongly reduces DNA-binding and displays 12000-fold increase in spontaneous mutation accumulation; when associated with E-273." evidence="7">
    <original>R</original>
    <variation>E</variation>
    <location>
        <position position="274"/>
    </location>
</feature>
<feature type="mutagenesis site" description="Partially defective in a mismatch repair assay." evidence="4">
    <original>I</original>
    <variation>A</variation>
    <location>
        <position position="326"/>
    </location>
</feature>
<feature type="mutagenesis site" description="Fully functional in a mismatch repair assay." evidence="4">
    <original>I</original>
    <variation>V</variation>
    <location>
        <position position="326"/>
    </location>
</feature>
<feature type="mutagenesis site" description="Defective in a mismatch repair assay." evidence="4">
    <original>Q</original>
    <variation>L</variation>
    <location>
        <position position="552"/>
    </location>
</feature>
<feature type="mutagenesis site" description="Defective in a mismatch repair assay." evidence="4">
    <original>R</original>
    <variation>P</variation>
    <location>
        <position position="672"/>
    </location>
</feature>
<feature type="mutagenesis site" description="Fully functional in a mismatch repair assay." evidence="4">
    <original>A</original>
    <variation>T</variation>
    <location>
        <position position="694"/>
    </location>
</feature>
<feature type="mutagenesis site" description="Displays an increase in spontaneous mutation accumulation. Does not impair heterodimer formation." evidence="11">
    <original>K</original>
    <variation>E</variation>
    <location>
        <position position="764"/>
    </location>
</feature>
<feature type="mutagenesis site" description="No effect." evidence="11">
    <original>K</original>
    <variation>R</variation>
    <location>
        <position position="764"/>
    </location>
</feature>
<feature type="mutagenesis site" description="Displays an increase in spontaneous mutation accumulation. Does not impair heterodimer formation." evidence="11">
    <original>F</original>
    <variation>A</variation>
    <location>
        <position position="766"/>
    </location>
</feature>
<feature type="mutagenesis site" description="Displays an increase in spontaneous mutation accumulation. Does not impair heterodimer formation." evidence="11">
    <original>E</original>
    <variation>D</variation>
    <location>
        <position position="767"/>
    </location>
</feature>
<feature type="mutagenesis site" description="No effect." evidence="11">
    <original>C</original>
    <variation>A</variation>
    <location>
        <position position="769"/>
    </location>
</feature>
<feature type="mutagenesis site" description="Displays an increase in spontaneous mutation accumulation. Does not impair heterodimer formation." evidence="11">
    <original>C</original>
    <variation>S</variation>
    <location>
        <position position="769"/>
    </location>
</feature>
<feature type="sequence conflict" description="In Ref. 1; AAA16835." evidence="13" ref="1">
    <original>P</original>
    <variation>L</variation>
    <location>
        <position position="258"/>
    </location>
</feature>
<feature type="sequence conflict" description="In Ref. 1; AAA16835." evidence="13" ref="1">
    <original>N</original>
    <variation>F</variation>
    <location>
        <position position="288"/>
    </location>
</feature>
<feature type="sequence conflict" description="In Ref. 1; AAA16835." evidence="13" ref="1">
    <original>S</original>
    <variation>L</variation>
    <location>
        <position position="708"/>
    </location>
</feature>
<feature type="helix" evidence="16">
    <location>
        <begin position="512"/>
        <end position="524"/>
    </location>
</feature>
<feature type="helix" evidence="16">
    <location>
        <begin position="527"/>
        <end position="534"/>
    </location>
</feature>
<feature type="strand" evidence="16">
    <location>
        <begin position="537"/>
        <end position="543"/>
    </location>
</feature>
<feature type="turn" evidence="16">
    <location>
        <begin position="544"/>
        <end position="547"/>
    </location>
</feature>
<feature type="strand" evidence="16">
    <location>
        <begin position="548"/>
        <end position="553"/>
    </location>
</feature>
<feature type="strand" evidence="16">
    <location>
        <begin position="556"/>
        <end position="561"/>
    </location>
</feature>
<feature type="helix" evidence="16">
    <location>
        <begin position="562"/>
        <end position="576"/>
    </location>
</feature>
<feature type="turn" evidence="16">
    <location>
        <begin position="577"/>
        <end position="579"/>
    </location>
</feature>
<feature type="strand" evidence="16">
    <location>
        <begin position="582"/>
        <end position="585"/>
    </location>
</feature>
<feature type="helix" evidence="15">
    <location>
        <begin position="591"/>
        <end position="593"/>
    </location>
</feature>
<feature type="helix" evidence="16">
    <location>
        <begin position="597"/>
        <end position="600"/>
    </location>
</feature>
<feature type="helix" evidence="16">
    <location>
        <begin position="601"/>
        <end position="603"/>
    </location>
</feature>
<feature type="helix" evidence="17">
    <location>
        <begin position="605"/>
        <end position="607"/>
    </location>
</feature>
<feature type="helix" evidence="16">
    <location>
        <begin position="610"/>
        <end position="621"/>
    </location>
</feature>
<feature type="helix" evidence="16">
    <location>
        <begin position="624"/>
        <end position="631"/>
    </location>
</feature>
<feature type="strand" evidence="16">
    <location>
        <begin position="634"/>
        <end position="637"/>
    </location>
</feature>
<feature type="helix" evidence="15">
    <location>
        <begin position="644"/>
        <end position="646"/>
    </location>
</feature>
<feature type="strand" evidence="16">
    <location>
        <begin position="647"/>
        <end position="654"/>
    </location>
</feature>
<feature type="helix" evidence="16">
    <location>
        <begin position="663"/>
        <end position="665"/>
    </location>
</feature>
<feature type="helix" evidence="16">
    <location>
        <begin position="666"/>
        <end position="675"/>
    </location>
</feature>
<feature type="helix" evidence="16">
    <location>
        <begin position="682"/>
        <end position="697"/>
    </location>
</feature>
<feature type="strand" evidence="18">
    <location>
        <begin position="710"/>
        <end position="712"/>
    </location>
</feature>
<feature type="helix" evidence="16">
    <location>
        <begin position="714"/>
        <end position="733"/>
    </location>
</feature>
<feature type="helix" evidence="16">
    <location>
        <begin position="735"/>
        <end position="742"/>
    </location>
</feature>
<feature type="helix" evidence="16">
    <location>
        <begin position="747"/>
        <end position="752"/>
    </location>
</feature>
<feature type="strand" evidence="16">
    <location>
        <begin position="753"/>
        <end position="758"/>
    </location>
</feature>
<feature type="helix" evidence="16">
    <location>
        <begin position="759"/>
        <end position="765"/>
    </location>
</feature>
<proteinExistence type="evidence at protein level"/>
<sequence>MSLRIKALDASVVNKIAAGEIIISPVNALKEMMENSIDANATMIDILVKEGGIKVLQITDNGSGINKADLPILCERFTTSKLQKFEDLSQIQTYGFRGEALASISHVARVTVTTKVKEDRCAWRVSYAEGKMLESPKPVAGKDGTTILVEDLFFNIPSRLRALRSHNDEYSKILDVVGRYAIHSKDIGFSCKKFGDSNYSLSVKPSYTVQDRIRTVFNKSVASNLITFHISKVEDLNLESVDGKVCNLNFISKKSISPIFFINNRLVTCDLLRRALNSVYSNYLPKGNRPFIYLGIVIDPAAVDVNVHPTKREVRFLSQDEIIEKIANQLHAELSAIDTSRTFKASSISTNKPESLIPFNDTIESDRNRKSLRQAQVVENSYTTANSQLRKAKRQENKLVRIDASQAKITSFLSSSQQFNFEGSSTKRQLSEPKVTNVSHSQEAEKLTLNESEQPRDANTINDNDLKDQPKKKQKLGDYKVPSIADDEKNALPISKDGYIRVPKERVNVNLTSIKKLREKVDDSIHRELTDIFANLNYVGVVDEERRLAAIQHDLKLFLIDYGSVCYELFYQIGLTDFANFGKINLQSTNVSDDIVLYNLLSEFDELNDDASKEKIISKIWDMSSMLNEYYSIELVNDGLDNDLKSVKLKSLPLLLKGYIPSLVKLPFFIYRLGKEVDWEDEQECLDGILREIALLYIPDMVPKVDTSDASLSEDEKAQFINRKEHISSLLEHVLFPCIKRRFLAPRHILKDVVEIANLPDLYKVFERC</sequence>
<name>MLH1_YEAST</name>